<organism>
    <name type="scientific">Acidovorax sp. (strain JS42)</name>
    <dbReference type="NCBI Taxonomy" id="232721"/>
    <lineage>
        <taxon>Bacteria</taxon>
        <taxon>Pseudomonadati</taxon>
        <taxon>Pseudomonadota</taxon>
        <taxon>Betaproteobacteria</taxon>
        <taxon>Burkholderiales</taxon>
        <taxon>Comamonadaceae</taxon>
        <taxon>Acidovorax</taxon>
    </lineage>
</organism>
<gene>
    <name evidence="1" type="primary">rsmH</name>
    <name type="synonym">mraW</name>
    <name type="ordered locus">Ajs_3678</name>
</gene>
<proteinExistence type="inferred from homology"/>
<reference key="1">
    <citation type="submission" date="2006-12" db="EMBL/GenBank/DDBJ databases">
        <title>Complete sequence of chromosome 1 of Acidovorax sp. JS42.</title>
        <authorList>
            <person name="Copeland A."/>
            <person name="Lucas S."/>
            <person name="Lapidus A."/>
            <person name="Barry K."/>
            <person name="Detter J.C."/>
            <person name="Glavina del Rio T."/>
            <person name="Dalin E."/>
            <person name="Tice H."/>
            <person name="Pitluck S."/>
            <person name="Chertkov O."/>
            <person name="Brettin T."/>
            <person name="Bruce D."/>
            <person name="Han C."/>
            <person name="Tapia R."/>
            <person name="Gilna P."/>
            <person name="Schmutz J."/>
            <person name="Larimer F."/>
            <person name="Land M."/>
            <person name="Hauser L."/>
            <person name="Kyrpides N."/>
            <person name="Kim E."/>
            <person name="Stahl D."/>
            <person name="Richardson P."/>
        </authorList>
    </citation>
    <scope>NUCLEOTIDE SEQUENCE [LARGE SCALE GENOMIC DNA]</scope>
    <source>
        <strain>JS42</strain>
    </source>
</reference>
<accession>A1WC14</accession>
<comment type="function">
    <text evidence="1">Specifically methylates the N4 position of cytidine in position 1402 (C1402) of 16S rRNA.</text>
</comment>
<comment type="catalytic activity">
    <reaction evidence="1">
        <text>cytidine(1402) in 16S rRNA + S-adenosyl-L-methionine = N(4)-methylcytidine(1402) in 16S rRNA + S-adenosyl-L-homocysteine + H(+)</text>
        <dbReference type="Rhea" id="RHEA:42928"/>
        <dbReference type="Rhea" id="RHEA-COMP:10286"/>
        <dbReference type="Rhea" id="RHEA-COMP:10287"/>
        <dbReference type="ChEBI" id="CHEBI:15378"/>
        <dbReference type="ChEBI" id="CHEBI:57856"/>
        <dbReference type="ChEBI" id="CHEBI:59789"/>
        <dbReference type="ChEBI" id="CHEBI:74506"/>
        <dbReference type="ChEBI" id="CHEBI:82748"/>
        <dbReference type="EC" id="2.1.1.199"/>
    </reaction>
</comment>
<comment type="subcellular location">
    <subcellularLocation>
        <location evidence="1">Cytoplasm</location>
    </subcellularLocation>
</comment>
<comment type="similarity">
    <text evidence="1">Belongs to the methyltransferase superfamily. RsmH family.</text>
</comment>
<keyword id="KW-0963">Cytoplasm</keyword>
<keyword id="KW-0489">Methyltransferase</keyword>
<keyword id="KW-0698">rRNA processing</keyword>
<keyword id="KW-0949">S-adenosyl-L-methionine</keyword>
<keyword id="KW-0808">Transferase</keyword>
<protein>
    <recommendedName>
        <fullName evidence="1">Ribosomal RNA small subunit methyltransferase H</fullName>
        <ecNumber evidence="1">2.1.1.199</ecNumber>
    </recommendedName>
    <alternativeName>
        <fullName evidence="1">16S rRNA m(4)C1402 methyltransferase</fullName>
    </alternativeName>
    <alternativeName>
        <fullName evidence="1">rRNA (cytosine-N(4)-)-methyltransferase RsmH</fullName>
    </alternativeName>
</protein>
<sequence>MNQPLQHTTVLLDEAVHALLGDGDAPAGTFVDGTFGRGGHSRLILQRLGPQGRLVAFDKDTEAIQAAARITDARFSIRHQGFSHLGELPAASVSGVLLDLGVSSPQIDDPQRGFSFRFDGPLDMRMDTTRGQSVAEWLADAETAQIAEVIRDYGEERFAGPIAKAIVARRTERGPIASTAELADIVAGAVKTREPGQNPATRTFQALRIFINAELEELQQALEGSLHVLRPGGRLVVISFHSLEDRIVKQFIAQHSKEVYDRRAPFAPPQPMRLRALERIKPSTDEVAANARARSAVMRVAERTEVPA</sequence>
<name>RSMH_ACISJ</name>
<evidence type="ECO:0000255" key="1">
    <source>
        <dbReference type="HAMAP-Rule" id="MF_01007"/>
    </source>
</evidence>
<dbReference type="EC" id="2.1.1.199" evidence="1"/>
<dbReference type="EMBL" id="CP000539">
    <property type="protein sequence ID" value="ABM43789.1"/>
    <property type="molecule type" value="Genomic_DNA"/>
</dbReference>
<dbReference type="SMR" id="A1WC14"/>
<dbReference type="STRING" id="232721.Ajs_3678"/>
<dbReference type="KEGG" id="ajs:Ajs_3678"/>
<dbReference type="eggNOG" id="COG0275">
    <property type="taxonomic scope" value="Bacteria"/>
</dbReference>
<dbReference type="HOGENOM" id="CLU_038422_2_0_4"/>
<dbReference type="Proteomes" id="UP000000645">
    <property type="component" value="Chromosome"/>
</dbReference>
<dbReference type="GO" id="GO:0005737">
    <property type="term" value="C:cytoplasm"/>
    <property type="evidence" value="ECO:0007669"/>
    <property type="project" value="UniProtKB-SubCell"/>
</dbReference>
<dbReference type="GO" id="GO:0071424">
    <property type="term" value="F:rRNA (cytosine-N4-)-methyltransferase activity"/>
    <property type="evidence" value="ECO:0007669"/>
    <property type="project" value="UniProtKB-UniRule"/>
</dbReference>
<dbReference type="GO" id="GO:0070475">
    <property type="term" value="P:rRNA base methylation"/>
    <property type="evidence" value="ECO:0007669"/>
    <property type="project" value="UniProtKB-UniRule"/>
</dbReference>
<dbReference type="Gene3D" id="1.10.150.170">
    <property type="entry name" value="Putative methyltransferase TM0872, insert domain"/>
    <property type="match status" value="1"/>
</dbReference>
<dbReference type="Gene3D" id="3.40.50.150">
    <property type="entry name" value="Vaccinia Virus protein VP39"/>
    <property type="match status" value="1"/>
</dbReference>
<dbReference type="HAMAP" id="MF_01007">
    <property type="entry name" value="16SrRNA_methyltr_H"/>
    <property type="match status" value="1"/>
</dbReference>
<dbReference type="InterPro" id="IPR002903">
    <property type="entry name" value="RsmH"/>
</dbReference>
<dbReference type="InterPro" id="IPR023397">
    <property type="entry name" value="SAM-dep_MeTrfase_MraW_recog"/>
</dbReference>
<dbReference type="InterPro" id="IPR029063">
    <property type="entry name" value="SAM-dependent_MTases_sf"/>
</dbReference>
<dbReference type="NCBIfam" id="TIGR00006">
    <property type="entry name" value="16S rRNA (cytosine(1402)-N(4))-methyltransferase RsmH"/>
    <property type="match status" value="1"/>
</dbReference>
<dbReference type="PANTHER" id="PTHR11265:SF0">
    <property type="entry name" value="12S RRNA N4-METHYLCYTIDINE METHYLTRANSFERASE"/>
    <property type="match status" value="1"/>
</dbReference>
<dbReference type="PANTHER" id="PTHR11265">
    <property type="entry name" value="S-ADENOSYL-METHYLTRANSFERASE MRAW"/>
    <property type="match status" value="1"/>
</dbReference>
<dbReference type="Pfam" id="PF01795">
    <property type="entry name" value="Methyltransf_5"/>
    <property type="match status" value="1"/>
</dbReference>
<dbReference type="PIRSF" id="PIRSF004486">
    <property type="entry name" value="MraW"/>
    <property type="match status" value="1"/>
</dbReference>
<dbReference type="SUPFAM" id="SSF81799">
    <property type="entry name" value="Putative methyltransferase TM0872, insert domain"/>
    <property type="match status" value="1"/>
</dbReference>
<dbReference type="SUPFAM" id="SSF53335">
    <property type="entry name" value="S-adenosyl-L-methionine-dependent methyltransferases"/>
    <property type="match status" value="1"/>
</dbReference>
<feature type="chain" id="PRO_0000386687" description="Ribosomal RNA small subunit methyltransferase H">
    <location>
        <begin position="1"/>
        <end position="308"/>
    </location>
</feature>
<feature type="binding site" evidence="1">
    <location>
        <begin position="38"/>
        <end position="40"/>
    </location>
    <ligand>
        <name>S-adenosyl-L-methionine</name>
        <dbReference type="ChEBI" id="CHEBI:59789"/>
    </ligand>
</feature>
<feature type="binding site" evidence="1">
    <location>
        <position position="58"/>
    </location>
    <ligand>
        <name>S-adenosyl-L-methionine</name>
        <dbReference type="ChEBI" id="CHEBI:59789"/>
    </ligand>
</feature>
<feature type="binding site" evidence="1">
    <location>
        <position position="82"/>
    </location>
    <ligand>
        <name>S-adenosyl-L-methionine</name>
        <dbReference type="ChEBI" id="CHEBI:59789"/>
    </ligand>
</feature>
<feature type="binding site" evidence="1">
    <location>
        <position position="99"/>
    </location>
    <ligand>
        <name>S-adenosyl-L-methionine</name>
        <dbReference type="ChEBI" id="CHEBI:59789"/>
    </ligand>
</feature>
<feature type="binding site" evidence="1">
    <location>
        <position position="106"/>
    </location>
    <ligand>
        <name>S-adenosyl-L-methionine</name>
        <dbReference type="ChEBI" id="CHEBI:59789"/>
    </ligand>
</feature>